<proteinExistence type="inferred from homology"/>
<gene>
    <name evidence="1" type="primary">psd</name>
    <name type="ordered locus">OCAR_6512</name>
    <name type="ordered locus">OCA5_c15460</name>
</gene>
<sequence length="232" mass="25149">MSIAHSIRAQIPPIHPEGYPFIGGFAFASLILFWLWAPLGWIGVVLTIWCALFFRDPVRTTPVREGLVIAPADGRVSMVTPVVPPAELGLGDQPLMRISIFMSVFNCHVNRSPVAGRIERIAYRPGKFINAELDKASEDNERNSLVISTPAGRIGVVQIAGLVARRIVSFVREGESLAAGQRFGLIRFGSRLDVFLPEGGKPLVSVGQTAVAGETVLADFQIGDGGRVYRTD</sequence>
<feature type="chain" id="PRO_1000131476" description="Phosphatidylserine decarboxylase beta chain" evidence="1">
    <location>
        <begin position="1"/>
        <end position="189"/>
    </location>
</feature>
<feature type="chain" id="PRO_1000131477" description="Phosphatidylserine decarboxylase alpha chain" evidence="1">
    <location>
        <begin position="190"/>
        <end position="232"/>
    </location>
</feature>
<feature type="active site" description="Schiff-base intermediate with substrate; via pyruvic acid" evidence="1">
    <location>
        <position position="190"/>
    </location>
</feature>
<feature type="site" description="Cleavage (non-hydrolytic); by autocatalysis" evidence="1">
    <location>
        <begin position="189"/>
        <end position="190"/>
    </location>
</feature>
<feature type="modified residue" description="Pyruvic acid (Ser); by autocatalysis" evidence="1">
    <location>
        <position position="190"/>
    </location>
</feature>
<accession>B6JHT1</accession>
<accession>F8BZ66</accession>
<keyword id="KW-1003">Cell membrane</keyword>
<keyword id="KW-0210">Decarboxylase</keyword>
<keyword id="KW-0444">Lipid biosynthesis</keyword>
<keyword id="KW-0443">Lipid metabolism</keyword>
<keyword id="KW-0456">Lyase</keyword>
<keyword id="KW-0472">Membrane</keyword>
<keyword id="KW-0594">Phospholipid biosynthesis</keyword>
<keyword id="KW-1208">Phospholipid metabolism</keyword>
<keyword id="KW-0670">Pyruvate</keyword>
<keyword id="KW-1185">Reference proteome</keyword>
<keyword id="KW-0865">Zymogen</keyword>
<organism>
    <name type="scientific">Afipia carboxidovorans (strain ATCC 49405 / DSM 1227 / KCTC 32145 / OM5)</name>
    <name type="common">Oligotropha carboxidovorans</name>
    <dbReference type="NCBI Taxonomy" id="504832"/>
    <lineage>
        <taxon>Bacteria</taxon>
        <taxon>Pseudomonadati</taxon>
        <taxon>Pseudomonadota</taxon>
        <taxon>Alphaproteobacteria</taxon>
        <taxon>Hyphomicrobiales</taxon>
        <taxon>Nitrobacteraceae</taxon>
        <taxon>Afipia</taxon>
    </lineage>
</organism>
<dbReference type="EC" id="4.1.1.65" evidence="1"/>
<dbReference type="EMBL" id="CP001196">
    <property type="protein sequence ID" value="ACI93624.1"/>
    <property type="molecule type" value="Genomic_DNA"/>
</dbReference>
<dbReference type="EMBL" id="CP002826">
    <property type="protein sequence ID" value="AEI06262.1"/>
    <property type="molecule type" value="Genomic_DNA"/>
</dbReference>
<dbReference type="RefSeq" id="WP_012563650.1">
    <property type="nucleotide sequence ID" value="NC_015684.1"/>
</dbReference>
<dbReference type="SMR" id="B6JHT1"/>
<dbReference type="STRING" id="504832.OCA5_c15460"/>
<dbReference type="KEGG" id="oca:OCAR_6512"/>
<dbReference type="KEGG" id="ocg:OCA5_c15460"/>
<dbReference type="PATRIC" id="fig|504832.7.peg.1645"/>
<dbReference type="eggNOG" id="COG0688">
    <property type="taxonomic scope" value="Bacteria"/>
</dbReference>
<dbReference type="HOGENOM" id="CLU_072492_0_0_5"/>
<dbReference type="OrthoDB" id="9790893at2"/>
<dbReference type="UniPathway" id="UPA00558">
    <property type="reaction ID" value="UER00616"/>
</dbReference>
<dbReference type="Proteomes" id="UP000007730">
    <property type="component" value="Chromosome"/>
</dbReference>
<dbReference type="GO" id="GO:0005886">
    <property type="term" value="C:plasma membrane"/>
    <property type="evidence" value="ECO:0007669"/>
    <property type="project" value="UniProtKB-SubCell"/>
</dbReference>
<dbReference type="GO" id="GO:0004609">
    <property type="term" value="F:phosphatidylserine decarboxylase activity"/>
    <property type="evidence" value="ECO:0007669"/>
    <property type="project" value="UniProtKB-UniRule"/>
</dbReference>
<dbReference type="GO" id="GO:0006646">
    <property type="term" value="P:phosphatidylethanolamine biosynthetic process"/>
    <property type="evidence" value="ECO:0007669"/>
    <property type="project" value="UniProtKB-UniRule"/>
</dbReference>
<dbReference type="HAMAP" id="MF_00664">
    <property type="entry name" value="PS_decarb_PSD_A"/>
    <property type="match status" value="1"/>
</dbReference>
<dbReference type="InterPro" id="IPR003817">
    <property type="entry name" value="PS_Dcarbxylase"/>
</dbReference>
<dbReference type="InterPro" id="IPR033175">
    <property type="entry name" value="PSD-A"/>
</dbReference>
<dbReference type="NCBIfam" id="NF003677">
    <property type="entry name" value="PRK05305.1-1"/>
    <property type="match status" value="1"/>
</dbReference>
<dbReference type="NCBIfam" id="NF003678">
    <property type="entry name" value="PRK05305.1-2"/>
    <property type="match status" value="1"/>
</dbReference>
<dbReference type="NCBIfam" id="NF003679">
    <property type="entry name" value="PRK05305.1-3"/>
    <property type="match status" value="1"/>
</dbReference>
<dbReference type="NCBIfam" id="NF003685">
    <property type="entry name" value="PRK05305.2-5"/>
    <property type="match status" value="1"/>
</dbReference>
<dbReference type="PANTHER" id="PTHR35809">
    <property type="entry name" value="ARCHAETIDYLSERINE DECARBOXYLASE PROENZYME-RELATED"/>
    <property type="match status" value="1"/>
</dbReference>
<dbReference type="PANTHER" id="PTHR35809:SF1">
    <property type="entry name" value="ARCHAETIDYLSERINE DECARBOXYLASE PROENZYME-RELATED"/>
    <property type="match status" value="1"/>
</dbReference>
<dbReference type="Pfam" id="PF02666">
    <property type="entry name" value="PS_Dcarbxylase"/>
    <property type="match status" value="1"/>
</dbReference>
<comment type="function">
    <text evidence="1">Catalyzes the formation of phosphatidylethanolamine (PtdEtn) from phosphatidylserine (PtdSer).</text>
</comment>
<comment type="catalytic activity">
    <reaction evidence="1">
        <text>a 1,2-diacyl-sn-glycero-3-phospho-L-serine + H(+) = a 1,2-diacyl-sn-glycero-3-phosphoethanolamine + CO2</text>
        <dbReference type="Rhea" id="RHEA:20828"/>
        <dbReference type="ChEBI" id="CHEBI:15378"/>
        <dbReference type="ChEBI" id="CHEBI:16526"/>
        <dbReference type="ChEBI" id="CHEBI:57262"/>
        <dbReference type="ChEBI" id="CHEBI:64612"/>
        <dbReference type="EC" id="4.1.1.65"/>
    </reaction>
</comment>
<comment type="cofactor">
    <cofactor evidence="1">
        <name>pyruvate</name>
        <dbReference type="ChEBI" id="CHEBI:15361"/>
    </cofactor>
    <text evidence="1">Binds 1 pyruvoyl group covalently per subunit.</text>
</comment>
<comment type="pathway">
    <text evidence="1">Phospholipid metabolism; phosphatidylethanolamine biosynthesis; phosphatidylethanolamine from CDP-diacylglycerol: step 2/2.</text>
</comment>
<comment type="subunit">
    <text evidence="1">Heterodimer of a large membrane-associated beta subunit and a small pyruvoyl-containing alpha subunit.</text>
</comment>
<comment type="subcellular location">
    <subcellularLocation>
        <location evidence="1">Cell membrane</location>
        <topology evidence="1">Peripheral membrane protein</topology>
    </subcellularLocation>
</comment>
<comment type="PTM">
    <text evidence="1">Is synthesized initially as an inactive proenzyme. Formation of the active enzyme involves a self-maturation process in which the active site pyruvoyl group is generated from an internal serine residue via an autocatalytic post-translational modification. Two non-identical subunits are generated from the proenzyme in this reaction, and the pyruvate is formed at the N-terminus of the alpha chain, which is derived from the carboxyl end of the proenzyme. The post-translation cleavage follows an unusual pathway, termed non-hydrolytic serinolysis, in which the side chain hydroxyl group of the serine supplies its oxygen atom to form the C-terminus of the beta chain, while the remainder of the serine residue undergoes an oxidative deamination to produce ammonia and the pyruvoyl prosthetic group on the alpha chain.</text>
</comment>
<comment type="similarity">
    <text evidence="1">Belongs to the phosphatidylserine decarboxylase family. PSD-A subfamily.</text>
</comment>
<protein>
    <recommendedName>
        <fullName evidence="1">Phosphatidylserine decarboxylase proenzyme</fullName>
        <ecNumber evidence="1">4.1.1.65</ecNumber>
    </recommendedName>
    <component>
        <recommendedName>
            <fullName evidence="1">Phosphatidylserine decarboxylase alpha chain</fullName>
        </recommendedName>
    </component>
    <component>
        <recommendedName>
            <fullName evidence="1">Phosphatidylserine decarboxylase beta chain</fullName>
        </recommendedName>
    </component>
</protein>
<evidence type="ECO:0000255" key="1">
    <source>
        <dbReference type="HAMAP-Rule" id="MF_00664"/>
    </source>
</evidence>
<reference key="1">
    <citation type="journal article" date="2008" name="J. Bacteriol.">
        <title>Genome sequence of the chemolithoautotrophic bacterium Oligotropha carboxidovorans OM5T.</title>
        <authorList>
            <person name="Paul D."/>
            <person name="Bridges S."/>
            <person name="Burgess S.C."/>
            <person name="Dandass Y."/>
            <person name="Lawrence M.L."/>
        </authorList>
    </citation>
    <scope>NUCLEOTIDE SEQUENCE [LARGE SCALE GENOMIC DNA]</scope>
    <source>
        <strain>ATCC 49405 / DSM 1227 / KCTC 32145 / OM5</strain>
    </source>
</reference>
<reference key="2">
    <citation type="journal article" date="2011" name="J. Bacteriol.">
        <title>Complete genome sequences of the chemolithoautotrophic Oligotropha carboxidovorans strains OM4 and OM5.</title>
        <authorList>
            <person name="Volland S."/>
            <person name="Rachinger M."/>
            <person name="Strittmatter A."/>
            <person name="Daniel R."/>
            <person name="Gottschalk G."/>
            <person name="Meyer O."/>
        </authorList>
    </citation>
    <scope>NUCLEOTIDE SEQUENCE [LARGE SCALE GENOMIC DNA]</scope>
    <source>
        <strain>ATCC 49405 / DSM 1227 / KCTC 32145 / OM5</strain>
    </source>
</reference>
<name>PSD_AFIC5</name>